<name>DXS_BARBK</name>
<organism>
    <name type="scientific">Bartonella bacilliformis (strain ATCC 35685 / KC583 / Herrer 020/F12,63)</name>
    <dbReference type="NCBI Taxonomy" id="360095"/>
    <lineage>
        <taxon>Bacteria</taxon>
        <taxon>Pseudomonadati</taxon>
        <taxon>Pseudomonadota</taxon>
        <taxon>Alphaproteobacteria</taxon>
        <taxon>Hyphomicrobiales</taxon>
        <taxon>Bartonellaceae</taxon>
        <taxon>Bartonella</taxon>
    </lineage>
</organism>
<protein>
    <recommendedName>
        <fullName evidence="1">1-deoxy-D-xylulose-5-phosphate synthase</fullName>
        <ecNumber evidence="1">2.2.1.7</ecNumber>
    </recommendedName>
    <alternativeName>
        <fullName evidence="1">1-deoxyxylulose-5-phosphate synthase</fullName>
        <shortName evidence="1">DXP synthase</shortName>
        <shortName evidence="1">DXPS</shortName>
    </alternativeName>
</protein>
<comment type="function">
    <text evidence="1">Catalyzes the acyloin condensation reaction between C atoms 2 and 3 of pyruvate and glyceraldehyde 3-phosphate to yield 1-deoxy-D-xylulose-5-phosphate (DXP).</text>
</comment>
<comment type="catalytic activity">
    <reaction evidence="1">
        <text>D-glyceraldehyde 3-phosphate + pyruvate + H(+) = 1-deoxy-D-xylulose 5-phosphate + CO2</text>
        <dbReference type="Rhea" id="RHEA:12605"/>
        <dbReference type="ChEBI" id="CHEBI:15361"/>
        <dbReference type="ChEBI" id="CHEBI:15378"/>
        <dbReference type="ChEBI" id="CHEBI:16526"/>
        <dbReference type="ChEBI" id="CHEBI:57792"/>
        <dbReference type="ChEBI" id="CHEBI:59776"/>
        <dbReference type="EC" id="2.2.1.7"/>
    </reaction>
</comment>
<comment type="cofactor">
    <cofactor evidence="1">
        <name>Mg(2+)</name>
        <dbReference type="ChEBI" id="CHEBI:18420"/>
    </cofactor>
    <text evidence="1">Binds 1 Mg(2+) ion per subunit.</text>
</comment>
<comment type="cofactor">
    <cofactor evidence="1">
        <name>thiamine diphosphate</name>
        <dbReference type="ChEBI" id="CHEBI:58937"/>
    </cofactor>
    <text evidence="1">Binds 1 thiamine pyrophosphate per subunit.</text>
</comment>
<comment type="pathway">
    <text evidence="1">Metabolic intermediate biosynthesis; 1-deoxy-D-xylulose 5-phosphate biosynthesis; 1-deoxy-D-xylulose 5-phosphate from D-glyceraldehyde 3-phosphate and pyruvate: step 1/1.</text>
</comment>
<comment type="subunit">
    <text evidence="1">Homodimer.</text>
</comment>
<comment type="similarity">
    <text evidence="1">Belongs to the transketolase family. DXPS subfamily.</text>
</comment>
<reference key="1">
    <citation type="submission" date="2006-12" db="EMBL/GenBank/DDBJ databases">
        <authorList>
            <person name="Hendrix L."/>
            <person name="Mohamoud Y."/>
            <person name="Radune D."/>
            <person name="Shvartsbeyn A."/>
            <person name="Daugherty S."/>
            <person name="Dodson R."/>
            <person name="Durkin A.S."/>
            <person name="Harkins D."/>
            <person name="Huot H."/>
            <person name="Kothari S.P."/>
            <person name="Madupu R."/>
            <person name="Li J."/>
            <person name="Nelson W.C."/>
            <person name="Shrivastava S."/>
            <person name="Giglio M.G."/>
            <person name="Haft D."/>
            <person name="Selengut J."/>
            <person name="Fraser-Ligget C."/>
            <person name="Seshadri R."/>
        </authorList>
    </citation>
    <scope>NUCLEOTIDE SEQUENCE [LARGE SCALE GENOMIC DNA]</scope>
    <source>
        <strain>ATCC 35685 / KC583 / Herrer 020/F12,63</strain>
    </source>
</reference>
<gene>
    <name evidence="1" type="primary">dxs</name>
    <name type="ordered locus">BARBAKC583_0400</name>
</gene>
<feature type="chain" id="PRO_1000019010" description="1-deoxy-D-xylulose-5-phosphate synthase">
    <location>
        <begin position="1"/>
        <end position="638"/>
    </location>
</feature>
<feature type="binding site" evidence="1">
    <location>
        <position position="78"/>
    </location>
    <ligand>
        <name>thiamine diphosphate</name>
        <dbReference type="ChEBI" id="CHEBI:58937"/>
    </ligand>
</feature>
<feature type="binding site" evidence="1">
    <location>
        <begin position="119"/>
        <end position="121"/>
    </location>
    <ligand>
        <name>thiamine diphosphate</name>
        <dbReference type="ChEBI" id="CHEBI:58937"/>
    </ligand>
</feature>
<feature type="binding site" evidence="1">
    <location>
        <position position="151"/>
    </location>
    <ligand>
        <name>Mg(2+)</name>
        <dbReference type="ChEBI" id="CHEBI:18420"/>
    </ligand>
</feature>
<feature type="binding site" evidence="1">
    <location>
        <begin position="152"/>
        <end position="153"/>
    </location>
    <ligand>
        <name>thiamine diphosphate</name>
        <dbReference type="ChEBI" id="CHEBI:58937"/>
    </ligand>
</feature>
<feature type="binding site" evidence="1">
    <location>
        <position position="180"/>
    </location>
    <ligand>
        <name>Mg(2+)</name>
        <dbReference type="ChEBI" id="CHEBI:18420"/>
    </ligand>
</feature>
<feature type="binding site" evidence="1">
    <location>
        <position position="180"/>
    </location>
    <ligand>
        <name>thiamine diphosphate</name>
        <dbReference type="ChEBI" id="CHEBI:58937"/>
    </ligand>
</feature>
<feature type="binding site" evidence="1">
    <location>
        <position position="289"/>
    </location>
    <ligand>
        <name>thiamine diphosphate</name>
        <dbReference type="ChEBI" id="CHEBI:58937"/>
    </ligand>
</feature>
<feature type="binding site" evidence="1">
    <location>
        <position position="371"/>
    </location>
    <ligand>
        <name>thiamine diphosphate</name>
        <dbReference type="ChEBI" id="CHEBI:58937"/>
    </ligand>
</feature>
<keyword id="KW-0414">Isoprene biosynthesis</keyword>
<keyword id="KW-0460">Magnesium</keyword>
<keyword id="KW-0479">Metal-binding</keyword>
<keyword id="KW-0784">Thiamine biosynthesis</keyword>
<keyword id="KW-0786">Thiamine pyrophosphate</keyword>
<keyword id="KW-0808">Transferase</keyword>
<sequence length="638" mass="69533">MSRPLTPLLDCVLSPLDLRALPASDLARLADELRAEMIDVVSVTGGHLGAGLGVVELTIALHYIFNTPDDRIIWDVGHQAYPHKILTGRRDKIRTLRQEGGLSGFTKRSESIYDPFGAGHSSTSISAGLGMAMASALKAEERRNVIAVIGDGAMSAGMAYEAMNNAGALDARLIVILNDNDMSIAPPTGAMSAHLARLVSRPSYRHLRERIKLFSKKFPKFFSEQASRSEEFARGFLVGGTLFDELGFYYVGPIDGHNFEHLLPVLKNVRAYPNGPVLVHVVTHKGKGYAPAEESADKYHGVNRFDVVTGKQVKAQSTRLSYTKVFSKALIEEATHDHKIVAITAAMPTGTGLDSFAEKFSDRMFDVGIAEQHAVTFAAGIACEGYKPFVAIYSTFLQRAYDQIIHDVSIQKLPVRFAIDRAGFVGADGATHAGSFDIVFLATLPEFVVMAPSDEVELMHMVRTAAVYDQGPISFRYPRGEGIGMDLPQRGEVLEIGKGRVLREGSRVALVCFGTQLSEVLVAADELAAEGISTTVADARFAKPLDKDLMRRLAREHEVFITIEEGAIGGFGAHVLQFLAQEALLEHGLKVRTLRLPDEYLNHGSPEKILSRVGLDAKGIINAVFTSLGYETRKTLQI</sequence>
<proteinExistence type="inferred from homology"/>
<dbReference type="EC" id="2.2.1.7" evidence="1"/>
<dbReference type="EMBL" id="CP000524">
    <property type="protein sequence ID" value="ABM45122.1"/>
    <property type="molecule type" value="Genomic_DNA"/>
</dbReference>
<dbReference type="RefSeq" id="WP_005766409.1">
    <property type="nucleotide sequence ID" value="NC_008783.1"/>
</dbReference>
<dbReference type="SMR" id="A1URW6"/>
<dbReference type="STRING" id="360095.BARBAKC583_0400"/>
<dbReference type="GeneID" id="4683822"/>
<dbReference type="KEGG" id="bbk:BARBAKC583_0400"/>
<dbReference type="PATRIC" id="fig|360095.6.peg.383"/>
<dbReference type="eggNOG" id="COG1154">
    <property type="taxonomic scope" value="Bacteria"/>
</dbReference>
<dbReference type="HOGENOM" id="CLU_009227_1_4_5"/>
<dbReference type="OrthoDB" id="9803371at2"/>
<dbReference type="UniPathway" id="UPA00064">
    <property type="reaction ID" value="UER00091"/>
</dbReference>
<dbReference type="Proteomes" id="UP000000643">
    <property type="component" value="Chromosome"/>
</dbReference>
<dbReference type="GO" id="GO:0008661">
    <property type="term" value="F:1-deoxy-D-xylulose-5-phosphate synthase activity"/>
    <property type="evidence" value="ECO:0007669"/>
    <property type="project" value="UniProtKB-UniRule"/>
</dbReference>
<dbReference type="GO" id="GO:0000287">
    <property type="term" value="F:magnesium ion binding"/>
    <property type="evidence" value="ECO:0007669"/>
    <property type="project" value="UniProtKB-UniRule"/>
</dbReference>
<dbReference type="GO" id="GO:0030976">
    <property type="term" value="F:thiamine pyrophosphate binding"/>
    <property type="evidence" value="ECO:0007669"/>
    <property type="project" value="UniProtKB-UniRule"/>
</dbReference>
<dbReference type="GO" id="GO:0052865">
    <property type="term" value="P:1-deoxy-D-xylulose 5-phosphate biosynthetic process"/>
    <property type="evidence" value="ECO:0007669"/>
    <property type="project" value="UniProtKB-UniPathway"/>
</dbReference>
<dbReference type="GO" id="GO:0019682">
    <property type="term" value="P:glyceraldehyde-3-phosphate metabolic process"/>
    <property type="evidence" value="ECO:0007669"/>
    <property type="project" value="UniProtKB-ARBA"/>
</dbReference>
<dbReference type="GO" id="GO:0016114">
    <property type="term" value="P:terpenoid biosynthetic process"/>
    <property type="evidence" value="ECO:0007669"/>
    <property type="project" value="UniProtKB-UniRule"/>
</dbReference>
<dbReference type="GO" id="GO:0009228">
    <property type="term" value="P:thiamine biosynthetic process"/>
    <property type="evidence" value="ECO:0007669"/>
    <property type="project" value="UniProtKB-UniRule"/>
</dbReference>
<dbReference type="CDD" id="cd02007">
    <property type="entry name" value="TPP_DXS"/>
    <property type="match status" value="1"/>
</dbReference>
<dbReference type="CDD" id="cd07033">
    <property type="entry name" value="TPP_PYR_DXS_TK_like"/>
    <property type="match status" value="1"/>
</dbReference>
<dbReference type="FunFam" id="3.40.50.920:FF:000002">
    <property type="entry name" value="1-deoxy-D-xylulose-5-phosphate synthase"/>
    <property type="match status" value="1"/>
</dbReference>
<dbReference type="FunFam" id="3.40.50.970:FF:000005">
    <property type="entry name" value="1-deoxy-D-xylulose-5-phosphate synthase"/>
    <property type="match status" value="1"/>
</dbReference>
<dbReference type="Gene3D" id="3.40.50.920">
    <property type="match status" value="1"/>
</dbReference>
<dbReference type="Gene3D" id="3.40.50.970">
    <property type="match status" value="2"/>
</dbReference>
<dbReference type="HAMAP" id="MF_00315">
    <property type="entry name" value="DXP_synth"/>
    <property type="match status" value="1"/>
</dbReference>
<dbReference type="InterPro" id="IPR005477">
    <property type="entry name" value="Dxylulose-5-P_synthase"/>
</dbReference>
<dbReference type="InterPro" id="IPR029061">
    <property type="entry name" value="THDP-binding"/>
</dbReference>
<dbReference type="InterPro" id="IPR009014">
    <property type="entry name" value="Transketo_C/PFOR_II"/>
</dbReference>
<dbReference type="InterPro" id="IPR005475">
    <property type="entry name" value="Transketolase-like_Pyr-bd"/>
</dbReference>
<dbReference type="InterPro" id="IPR033248">
    <property type="entry name" value="Transketolase_C"/>
</dbReference>
<dbReference type="InterPro" id="IPR049557">
    <property type="entry name" value="Transketolase_CS"/>
</dbReference>
<dbReference type="NCBIfam" id="TIGR00204">
    <property type="entry name" value="dxs"/>
    <property type="match status" value="1"/>
</dbReference>
<dbReference type="NCBIfam" id="NF003933">
    <property type="entry name" value="PRK05444.2-2"/>
    <property type="match status" value="1"/>
</dbReference>
<dbReference type="PANTHER" id="PTHR43322">
    <property type="entry name" value="1-D-DEOXYXYLULOSE 5-PHOSPHATE SYNTHASE-RELATED"/>
    <property type="match status" value="1"/>
</dbReference>
<dbReference type="PANTHER" id="PTHR43322:SF5">
    <property type="entry name" value="1-DEOXY-D-XYLULOSE-5-PHOSPHATE SYNTHASE, CHLOROPLASTIC"/>
    <property type="match status" value="1"/>
</dbReference>
<dbReference type="Pfam" id="PF13292">
    <property type="entry name" value="DXP_synthase_N"/>
    <property type="match status" value="1"/>
</dbReference>
<dbReference type="Pfam" id="PF02779">
    <property type="entry name" value="Transket_pyr"/>
    <property type="match status" value="1"/>
</dbReference>
<dbReference type="Pfam" id="PF02780">
    <property type="entry name" value="Transketolase_C"/>
    <property type="match status" value="1"/>
</dbReference>
<dbReference type="SMART" id="SM00861">
    <property type="entry name" value="Transket_pyr"/>
    <property type="match status" value="1"/>
</dbReference>
<dbReference type="SUPFAM" id="SSF52518">
    <property type="entry name" value="Thiamin diphosphate-binding fold (THDP-binding)"/>
    <property type="match status" value="2"/>
</dbReference>
<dbReference type="SUPFAM" id="SSF52922">
    <property type="entry name" value="TK C-terminal domain-like"/>
    <property type="match status" value="1"/>
</dbReference>
<dbReference type="PROSITE" id="PS00801">
    <property type="entry name" value="TRANSKETOLASE_1"/>
    <property type="match status" value="1"/>
</dbReference>
<accession>A1URW6</accession>
<evidence type="ECO:0000255" key="1">
    <source>
        <dbReference type="HAMAP-Rule" id="MF_00315"/>
    </source>
</evidence>